<name>RL25_RHOPA</name>
<keyword id="KW-0903">Direct protein sequencing</keyword>
<keyword id="KW-0687">Ribonucleoprotein</keyword>
<keyword id="KW-0689">Ribosomal protein</keyword>
<keyword id="KW-0694">RNA-binding</keyword>
<keyword id="KW-0699">rRNA-binding</keyword>
<sequence length="230" mass="23970">MTSVLELKATARPKSGKGAARAERRAGRVPGVIYGDNQSPLPISVEEKELRLRILAGRFLTTVFDVVLDGKKHRVIPRDYHLDPVRDFPIHVDFLRLGAGATIRVSVPLHLKGLEVAPGVKRGGTFNIVTHTVELEAPAENIPQFIEADVSTLDIGVSLHLSDIALPTGVKSVSRDDVTLVTIVPPSGYNEDKAAAGAAPAAAAAPAAAAKAPAAAAKAPAAAAPAAKKK</sequence>
<proteinExistence type="evidence at protein level"/>
<protein>
    <recommendedName>
        <fullName evidence="2">Large ribosomal subunit protein bL25</fullName>
    </recommendedName>
    <alternativeName>
        <fullName>50S ribosomal protein L25</fullName>
    </alternativeName>
    <alternativeName>
        <fullName>General stress protein CTC</fullName>
    </alternativeName>
    <alternativeName>
        <fullName>RRP-L25</fullName>
    </alternativeName>
</protein>
<organism>
    <name type="scientific">Rhodopseudomonas palustris (strain ATCC BAA-98 / CGA009)</name>
    <dbReference type="NCBI Taxonomy" id="258594"/>
    <lineage>
        <taxon>Bacteria</taxon>
        <taxon>Pseudomonadati</taxon>
        <taxon>Pseudomonadota</taxon>
        <taxon>Alphaproteobacteria</taxon>
        <taxon>Hyphomicrobiales</taxon>
        <taxon>Nitrobacteraceae</taxon>
        <taxon>Rhodopseudomonas</taxon>
    </lineage>
</organism>
<accession>Q6N1P8</accession>
<feature type="initiator methionine" description="Removed">
    <location>
        <position position="1"/>
    </location>
</feature>
<feature type="chain" id="PRO_0000181590" description="Large ribosomal subunit protein bL25">
    <location>
        <begin position="2"/>
        <end position="230"/>
    </location>
</feature>
<gene>
    <name type="primary">rplY</name>
    <name type="synonym">ctc</name>
    <name type="ordered locus">RPA4356</name>
</gene>
<evidence type="ECO:0000250" key="1"/>
<evidence type="ECO:0000305" key="2"/>
<comment type="function">
    <text evidence="1">This is one of the proteins that binds to the 5S RNA in the ribosome where it forms part of the central protuberance.</text>
</comment>
<comment type="subunit">
    <text evidence="1">Part of the 50S ribosomal subunit; part of the 5S rRNA/L5/L18/L25 subcomplex. Contacts the 5S rRNA. Binds to the 5S rRNA independently of L5 and L18 (By similarity).</text>
</comment>
<comment type="similarity">
    <text evidence="2">Belongs to the bacterial ribosomal protein bL25 family. CTC subfamily.</text>
</comment>
<dbReference type="EMBL" id="BX572607">
    <property type="protein sequence ID" value="CAE29797.1"/>
    <property type="molecule type" value="Genomic_DNA"/>
</dbReference>
<dbReference type="RefSeq" id="WP_011159890.1">
    <property type="nucleotide sequence ID" value="NZ_CP116810.1"/>
</dbReference>
<dbReference type="SMR" id="Q6N1P8"/>
<dbReference type="IntAct" id="Q6N1P8">
    <property type="interactions" value="1"/>
</dbReference>
<dbReference type="STRING" id="258594.RPA4356"/>
<dbReference type="GeneID" id="66895489"/>
<dbReference type="eggNOG" id="COG1825">
    <property type="taxonomic scope" value="Bacteria"/>
</dbReference>
<dbReference type="HOGENOM" id="CLU_075939_0_0_5"/>
<dbReference type="PhylomeDB" id="Q6N1P8"/>
<dbReference type="GO" id="GO:0022625">
    <property type="term" value="C:cytosolic large ribosomal subunit"/>
    <property type="evidence" value="ECO:0007669"/>
    <property type="project" value="TreeGrafter"/>
</dbReference>
<dbReference type="GO" id="GO:0008097">
    <property type="term" value="F:5S rRNA binding"/>
    <property type="evidence" value="ECO:0007669"/>
    <property type="project" value="InterPro"/>
</dbReference>
<dbReference type="GO" id="GO:0003735">
    <property type="term" value="F:structural constituent of ribosome"/>
    <property type="evidence" value="ECO:0007669"/>
    <property type="project" value="InterPro"/>
</dbReference>
<dbReference type="GO" id="GO:0006412">
    <property type="term" value="P:translation"/>
    <property type="evidence" value="ECO:0007669"/>
    <property type="project" value="UniProtKB-UniRule"/>
</dbReference>
<dbReference type="CDD" id="cd00495">
    <property type="entry name" value="Ribosomal_L25_TL5_CTC"/>
    <property type="match status" value="1"/>
</dbReference>
<dbReference type="Gene3D" id="2.170.120.20">
    <property type="entry name" value="Ribosomal protein L25, beta domain"/>
    <property type="match status" value="1"/>
</dbReference>
<dbReference type="Gene3D" id="2.40.240.10">
    <property type="entry name" value="Ribosomal Protein L25, Chain P"/>
    <property type="match status" value="1"/>
</dbReference>
<dbReference type="HAMAP" id="MF_01334">
    <property type="entry name" value="Ribosomal_bL25_CTC"/>
    <property type="match status" value="1"/>
</dbReference>
<dbReference type="InterPro" id="IPR020056">
    <property type="entry name" value="Rbsml_bL25/Gln-tRNA_synth_N"/>
</dbReference>
<dbReference type="InterPro" id="IPR011035">
    <property type="entry name" value="Ribosomal_bL25/Gln-tRNA_synth"/>
</dbReference>
<dbReference type="InterPro" id="IPR020057">
    <property type="entry name" value="Ribosomal_bL25_b-dom"/>
</dbReference>
<dbReference type="InterPro" id="IPR037121">
    <property type="entry name" value="Ribosomal_bL25_C"/>
</dbReference>
<dbReference type="InterPro" id="IPR001021">
    <property type="entry name" value="Ribosomal_bL25_long"/>
</dbReference>
<dbReference type="InterPro" id="IPR029751">
    <property type="entry name" value="Ribosomal_L25_dom"/>
</dbReference>
<dbReference type="InterPro" id="IPR020930">
    <property type="entry name" value="Ribosomal_uL5_bac-type"/>
</dbReference>
<dbReference type="NCBIfam" id="TIGR00731">
    <property type="entry name" value="bL25_bact_ctc"/>
    <property type="match status" value="1"/>
</dbReference>
<dbReference type="NCBIfam" id="NF004128">
    <property type="entry name" value="PRK05618.1-2"/>
    <property type="match status" value="1"/>
</dbReference>
<dbReference type="PANTHER" id="PTHR33284">
    <property type="entry name" value="RIBOSOMAL PROTEIN L25/GLN-TRNA SYNTHETASE, ANTI-CODON-BINDING DOMAIN-CONTAINING PROTEIN"/>
    <property type="match status" value="1"/>
</dbReference>
<dbReference type="PANTHER" id="PTHR33284:SF1">
    <property type="entry name" value="RIBOSOMAL PROTEIN L25_GLN-TRNA SYNTHETASE, ANTI-CODON-BINDING DOMAIN-CONTAINING PROTEIN"/>
    <property type="match status" value="1"/>
</dbReference>
<dbReference type="Pfam" id="PF01386">
    <property type="entry name" value="Ribosomal_L25p"/>
    <property type="match status" value="1"/>
</dbReference>
<dbReference type="Pfam" id="PF14693">
    <property type="entry name" value="Ribosomal_TL5_C"/>
    <property type="match status" value="1"/>
</dbReference>
<dbReference type="SUPFAM" id="SSF50715">
    <property type="entry name" value="Ribosomal protein L25-like"/>
    <property type="match status" value="1"/>
</dbReference>
<reference key="1">
    <citation type="journal article" date="2004" name="Nat. Biotechnol.">
        <title>Complete genome sequence of the metabolically versatile photosynthetic bacterium Rhodopseudomonas palustris.</title>
        <authorList>
            <person name="Larimer F.W."/>
            <person name="Chain P."/>
            <person name="Hauser L."/>
            <person name="Lamerdin J.E."/>
            <person name="Malfatti S."/>
            <person name="Do L."/>
            <person name="Land M.L."/>
            <person name="Pelletier D.A."/>
            <person name="Beatty J.T."/>
            <person name="Lang A.S."/>
            <person name="Tabita F.R."/>
            <person name="Gibson J.L."/>
            <person name="Hanson T.E."/>
            <person name="Bobst C."/>
            <person name="Torres y Torres J.L."/>
            <person name="Peres C."/>
            <person name="Harrison F.H."/>
            <person name="Gibson J."/>
            <person name="Harwood C.S."/>
        </authorList>
    </citation>
    <scope>NUCLEOTIDE SEQUENCE [LARGE SCALE GENOMIC DNA]</scope>
    <source>
        <strain>ATCC BAA-98 / CGA009</strain>
    </source>
</reference>
<reference key="2">
    <citation type="journal article" date="2004" name="J. Proteome Res.">
        <title>Characterization of the 70S ribosome from Rhodopseudomonas palustris using an integrated 'top-down' and 'bottom-up' mass spectrometric approach.</title>
        <authorList>
            <person name="Strader M.B."/>
            <person name="VerBerkmoes N.C."/>
            <person name="Tabb D.L."/>
            <person name="Connelly H.M."/>
            <person name="Barton J.W."/>
            <person name="Bruce B.D."/>
            <person name="Pelletier D.A."/>
            <person name="Davison B.H."/>
            <person name="Hettich R.L."/>
            <person name="Larimer F.W."/>
            <person name="Hurst G.B."/>
        </authorList>
    </citation>
    <scope>PROTEIN SEQUENCE OF 194-228</scope>
    <source>
        <strain>ATCC BAA-98 / CGA009</strain>
    </source>
</reference>